<feature type="chain" id="PRO_1000016151" description="Aspartyl/glutamyl-tRNA(Asn/Gln) amidotransferase subunit C">
    <location>
        <begin position="1"/>
        <end position="98"/>
    </location>
</feature>
<reference key="1">
    <citation type="journal article" date="2005" name="Proc. Natl. Acad. Sci. U.S.A.">
        <title>The complete genome sequence of Mycobacterium avium subspecies paratuberculosis.</title>
        <authorList>
            <person name="Li L."/>
            <person name="Bannantine J.P."/>
            <person name="Zhang Q."/>
            <person name="Amonsin A."/>
            <person name="May B.J."/>
            <person name="Alt D."/>
            <person name="Banerji N."/>
            <person name="Kanjilal S."/>
            <person name="Kapur V."/>
        </authorList>
    </citation>
    <scope>NUCLEOTIDE SEQUENCE [LARGE SCALE GENOMIC DNA]</scope>
    <source>
        <strain>ATCC BAA-968 / K-10</strain>
    </source>
</reference>
<protein>
    <recommendedName>
        <fullName evidence="1">Aspartyl/glutamyl-tRNA(Asn/Gln) amidotransferase subunit C</fullName>
        <shortName evidence="1">Asp/Glu-ADT subunit C</shortName>
        <ecNumber evidence="1">6.3.5.-</ecNumber>
    </recommendedName>
</protein>
<sequence>MSQISRDEVAHLARLSRLALTDAELDSFAGQLDAILTHVSQVQAVDVTGVEPTDNPLKDLNVTRPDEPMPCLTQAEALAEAPEAVDGRFAVPQILGDE</sequence>
<organism>
    <name type="scientific">Mycolicibacterium paratuberculosis (strain ATCC BAA-968 / K-10)</name>
    <name type="common">Mycobacterium paratuberculosis</name>
    <dbReference type="NCBI Taxonomy" id="262316"/>
    <lineage>
        <taxon>Bacteria</taxon>
        <taxon>Bacillati</taxon>
        <taxon>Actinomycetota</taxon>
        <taxon>Actinomycetes</taxon>
        <taxon>Mycobacteriales</taxon>
        <taxon>Mycobacteriaceae</taxon>
        <taxon>Mycobacterium</taxon>
        <taxon>Mycobacterium avium complex (MAC)</taxon>
    </lineage>
</organism>
<dbReference type="EC" id="6.3.5.-" evidence="1"/>
<dbReference type="EMBL" id="AE016958">
    <property type="protein sequence ID" value="AAS05594.1"/>
    <property type="molecule type" value="Genomic_DNA"/>
</dbReference>
<dbReference type="RefSeq" id="WP_003874995.1">
    <property type="nucleotide sequence ID" value="NZ_CP106873.1"/>
</dbReference>
<dbReference type="SMR" id="Q73VG8"/>
<dbReference type="STRING" id="262316.MAP_3046c"/>
<dbReference type="GeneID" id="75271260"/>
<dbReference type="KEGG" id="mpa:MAP_3046c"/>
<dbReference type="eggNOG" id="COG0721">
    <property type="taxonomic scope" value="Bacteria"/>
</dbReference>
<dbReference type="HOGENOM" id="CLU_105899_1_0_11"/>
<dbReference type="Proteomes" id="UP000000580">
    <property type="component" value="Chromosome"/>
</dbReference>
<dbReference type="GO" id="GO:0050566">
    <property type="term" value="F:asparaginyl-tRNA synthase (glutamine-hydrolyzing) activity"/>
    <property type="evidence" value="ECO:0007669"/>
    <property type="project" value="RHEA"/>
</dbReference>
<dbReference type="GO" id="GO:0005524">
    <property type="term" value="F:ATP binding"/>
    <property type="evidence" value="ECO:0007669"/>
    <property type="project" value="UniProtKB-KW"/>
</dbReference>
<dbReference type="GO" id="GO:0050567">
    <property type="term" value="F:glutaminyl-tRNA synthase (glutamine-hydrolyzing) activity"/>
    <property type="evidence" value="ECO:0007669"/>
    <property type="project" value="UniProtKB-UniRule"/>
</dbReference>
<dbReference type="GO" id="GO:0070681">
    <property type="term" value="P:glutaminyl-tRNAGln biosynthesis via transamidation"/>
    <property type="evidence" value="ECO:0007669"/>
    <property type="project" value="TreeGrafter"/>
</dbReference>
<dbReference type="GO" id="GO:0006450">
    <property type="term" value="P:regulation of translational fidelity"/>
    <property type="evidence" value="ECO:0007669"/>
    <property type="project" value="InterPro"/>
</dbReference>
<dbReference type="GO" id="GO:0006412">
    <property type="term" value="P:translation"/>
    <property type="evidence" value="ECO:0007669"/>
    <property type="project" value="UniProtKB-UniRule"/>
</dbReference>
<dbReference type="Gene3D" id="1.10.20.60">
    <property type="entry name" value="Glu-tRNAGln amidotransferase C subunit, N-terminal domain"/>
    <property type="match status" value="1"/>
</dbReference>
<dbReference type="HAMAP" id="MF_00122">
    <property type="entry name" value="GatC"/>
    <property type="match status" value="1"/>
</dbReference>
<dbReference type="InterPro" id="IPR036113">
    <property type="entry name" value="Asp/Glu-ADT_sf_sub_c"/>
</dbReference>
<dbReference type="InterPro" id="IPR003837">
    <property type="entry name" value="GatC"/>
</dbReference>
<dbReference type="NCBIfam" id="TIGR00135">
    <property type="entry name" value="gatC"/>
    <property type="match status" value="1"/>
</dbReference>
<dbReference type="PANTHER" id="PTHR15004">
    <property type="entry name" value="GLUTAMYL-TRNA(GLN) AMIDOTRANSFERASE SUBUNIT C, MITOCHONDRIAL"/>
    <property type="match status" value="1"/>
</dbReference>
<dbReference type="PANTHER" id="PTHR15004:SF0">
    <property type="entry name" value="GLUTAMYL-TRNA(GLN) AMIDOTRANSFERASE SUBUNIT C, MITOCHONDRIAL"/>
    <property type="match status" value="1"/>
</dbReference>
<dbReference type="Pfam" id="PF02686">
    <property type="entry name" value="GatC"/>
    <property type="match status" value="1"/>
</dbReference>
<dbReference type="SUPFAM" id="SSF141000">
    <property type="entry name" value="Glu-tRNAGln amidotransferase C subunit"/>
    <property type="match status" value="1"/>
</dbReference>
<accession>Q73VG8</accession>
<gene>
    <name evidence="1" type="primary">gatC</name>
    <name type="ordered locus">MAP_3046c</name>
</gene>
<keyword id="KW-0067">ATP-binding</keyword>
<keyword id="KW-0436">Ligase</keyword>
<keyword id="KW-0547">Nucleotide-binding</keyword>
<keyword id="KW-0648">Protein biosynthesis</keyword>
<keyword id="KW-1185">Reference proteome</keyword>
<proteinExistence type="inferred from homology"/>
<comment type="function">
    <text evidence="1">Allows the formation of correctly charged Asn-tRNA(Asn) or Gln-tRNA(Gln) through the transamidation of misacylated Asp-tRNA(Asn) or Glu-tRNA(Gln) in organisms which lack either or both of asparaginyl-tRNA or glutaminyl-tRNA synthetases. The reaction takes place in the presence of glutamine and ATP through an activated phospho-Asp-tRNA(Asn) or phospho-Glu-tRNA(Gln).</text>
</comment>
<comment type="catalytic activity">
    <reaction evidence="1">
        <text>L-glutamyl-tRNA(Gln) + L-glutamine + ATP + H2O = L-glutaminyl-tRNA(Gln) + L-glutamate + ADP + phosphate + H(+)</text>
        <dbReference type="Rhea" id="RHEA:17521"/>
        <dbReference type="Rhea" id="RHEA-COMP:9681"/>
        <dbReference type="Rhea" id="RHEA-COMP:9684"/>
        <dbReference type="ChEBI" id="CHEBI:15377"/>
        <dbReference type="ChEBI" id="CHEBI:15378"/>
        <dbReference type="ChEBI" id="CHEBI:29985"/>
        <dbReference type="ChEBI" id="CHEBI:30616"/>
        <dbReference type="ChEBI" id="CHEBI:43474"/>
        <dbReference type="ChEBI" id="CHEBI:58359"/>
        <dbReference type="ChEBI" id="CHEBI:78520"/>
        <dbReference type="ChEBI" id="CHEBI:78521"/>
        <dbReference type="ChEBI" id="CHEBI:456216"/>
    </reaction>
</comment>
<comment type="catalytic activity">
    <reaction evidence="1">
        <text>L-aspartyl-tRNA(Asn) + L-glutamine + ATP + H2O = L-asparaginyl-tRNA(Asn) + L-glutamate + ADP + phosphate + 2 H(+)</text>
        <dbReference type="Rhea" id="RHEA:14513"/>
        <dbReference type="Rhea" id="RHEA-COMP:9674"/>
        <dbReference type="Rhea" id="RHEA-COMP:9677"/>
        <dbReference type="ChEBI" id="CHEBI:15377"/>
        <dbReference type="ChEBI" id="CHEBI:15378"/>
        <dbReference type="ChEBI" id="CHEBI:29985"/>
        <dbReference type="ChEBI" id="CHEBI:30616"/>
        <dbReference type="ChEBI" id="CHEBI:43474"/>
        <dbReference type="ChEBI" id="CHEBI:58359"/>
        <dbReference type="ChEBI" id="CHEBI:78515"/>
        <dbReference type="ChEBI" id="CHEBI:78516"/>
        <dbReference type="ChEBI" id="CHEBI:456216"/>
    </reaction>
</comment>
<comment type="subunit">
    <text evidence="1">Heterotrimer of A, B and C subunits.</text>
</comment>
<comment type="similarity">
    <text evidence="1">Belongs to the GatC family.</text>
</comment>
<evidence type="ECO:0000255" key="1">
    <source>
        <dbReference type="HAMAP-Rule" id="MF_00122"/>
    </source>
</evidence>
<name>GATC_MYCPA</name>